<name>RS16_BURP0</name>
<keyword id="KW-0687">Ribonucleoprotein</keyword>
<keyword id="KW-0689">Ribosomal protein</keyword>
<sequence length="84" mass="9459">MVIIRLARGGSKKRPFYNIVATDSRNRRDGRFIERVGFYNPVATKGEALRIAQDRLTYWQGVGAQLSPTVERLVKQAQKAQPAA</sequence>
<reference key="1">
    <citation type="journal article" date="2010" name="Genome Biol. Evol.">
        <title>Continuing evolution of Burkholderia mallei through genome reduction and large-scale rearrangements.</title>
        <authorList>
            <person name="Losada L."/>
            <person name="Ronning C.M."/>
            <person name="DeShazer D."/>
            <person name="Woods D."/>
            <person name="Fedorova N."/>
            <person name="Kim H.S."/>
            <person name="Shabalina S.A."/>
            <person name="Pearson T.R."/>
            <person name="Brinkac L."/>
            <person name="Tan P."/>
            <person name="Nandi T."/>
            <person name="Crabtree J."/>
            <person name="Badger J."/>
            <person name="Beckstrom-Sternberg S."/>
            <person name="Saqib M."/>
            <person name="Schutzer S.E."/>
            <person name="Keim P."/>
            <person name="Nierman W.C."/>
        </authorList>
    </citation>
    <scope>NUCLEOTIDE SEQUENCE [LARGE SCALE GENOMIC DNA]</scope>
    <source>
        <strain>1106a</strain>
    </source>
</reference>
<accession>A3NXU3</accession>
<gene>
    <name evidence="1" type="primary">rpsP</name>
    <name type="ordered locus">BURPS1106A_2919</name>
</gene>
<protein>
    <recommendedName>
        <fullName evidence="1">Small ribosomal subunit protein bS16</fullName>
    </recommendedName>
    <alternativeName>
        <fullName evidence="2">30S ribosomal protein S16</fullName>
    </alternativeName>
</protein>
<evidence type="ECO:0000255" key="1">
    <source>
        <dbReference type="HAMAP-Rule" id="MF_00385"/>
    </source>
</evidence>
<evidence type="ECO:0000305" key="2"/>
<comment type="similarity">
    <text evidence="1">Belongs to the bacterial ribosomal protein bS16 family.</text>
</comment>
<feature type="chain" id="PRO_1000049229" description="Small ribosomal subunit protein bS16">
    <location>
        <begin position="1"/>
        <end position="84"/>
    </location>
</feature>
<organism>
    <name type="scientific">Burkholderia pseudomallei (strain 1106a)</name>
    <dbReference type="NCBI Taxonomy" id="357348"/>
    <lineage>
        <taxon>Bacteria</taxon>
        <taxon>Pseudomonadati</taxon>
        <taxon>Pseudomonadota</taxon>
        <taxon>Betaproteobacteria</taxon>
        <taxon>Burkholderiales</taxon>
        <taxon>Burkholderiaceae</taxon>
        <taxon>Burkholderia</taxon>
        <taxon>pseudomallei group</taxon>
    </lineage>
</organism>
<dbReference type="EMBL" id="CP000572">
    <property type="protein sequence ID" value="ABN88813.1"/>
    <property type="molecule type" value="Genomic_DNA"/>
</dbReference>
<dbReference type="RefSeq" id="WP_004189402.1">
    <property type="nucleotide sequence ID" value="NC_009076.1"/>
</dbReference>
<dbReference type="SMR" id="A3NXU3"/>
<dbReference type="GeneID" id="93061079"/>
<dbReference type="KEGG" id="bpl:BURPS1106A_2919"/>
<dbReference type="HOGENOM" id="CLU_100590_5_1_4"/>
<dbReference type="Proteomes" id="UP000006738">
    <property type="component" value="Chromosome I"/>
</dbReference>
<dbReference type="GO" id="GO:0005737">
    <property type="term" value="C:cytoplasm"/>
    <property type="evidence" value="ECO:0007669"/>
    <property type="project" value="UniProtKB-ARBA"/>
</dbReference>
<dbReference type="GO" id="GO:0015935">
    <property type="term" value="C:small ribosomal subunit"/>
    <property type="evidence" value="ECO:0007669"/>
    <property type="project" value="TreeGrafter"/>
</dbReference>
<dbReference type="GO" id="GO:0003735">
    <property type="term" value="F:structural constituent of ribosome"/>
    <property type="evidence" value="ECO:0007669"/>
    <property type="project" value="InterPro"/>
</dbReference>
<dbReference type="GO" id="GO:0006412">
    <property type="term" value="P:translation"/>
    <property type="evidence" value="ECO:0007669"/>
    <property type="project" value="UniProtKB-UniRule"/>
</dbReference>
<dbReference type="Gene3D" id="3.30.1320.10">
    <property type="match status" value="1"/>
</dbReference>
<dbReference type="HAMAP" id="MF_00385">
    <property type="entry name" value="Ribosomal_bS16"/>
    <property type="match status" value="1"/>
</dbReference>
<dbReference type="InterPro" id="IPR000307">
    <property type="entry name" value="Ribosomal_bS16"/>
</dbReference>
<dbReference type="InterPro" id="IPR023803">
    <property type="entry name" value="Ribosomal_bS16_dom_sf"/>
</dbReference>
<dbReference type="NCBIfam" id="TIGR00002">
    <property type="entry name" value="S16"/>
    <property type="match status" value="1"/>
</dbReference>
<dbReference type="PANTHER" id="PTHR12919">
    <property type="entry name" value="30S RIBOSOMAL PROTEIN S16"/>
    <property type="match status" value="1"/>
</dbReference>
<dbReference type="PANTHER" id="PTHR12919:SF20">
    <property type="entry name" value="SMALL RIBOSOMAL SUBUNIT PROTEIN BS16M"/>
    <property type="match status" value="1"/>
</dbReference>
<dbReference type="Pfam" id="PF00886">
    <property type="entry name" value="Ribosomal_S16"/>
    <property type="match status" value="1"/>
</dbReference>
<dbReference type="SUPFAM" id="SSF54565">
    <property type="entry name" value="Ribosomal protein S16"/>
    <property type="match status" value="1"/>
</dbReference>
<proteinExistence type="inferred from homology"/>